<reference key="1">
    <citation type="journal article" date="1996" name="Science">
        <title>Complete genome sequence of the methanogenic archaeon, Methanococcus jannaschii.</title>
        <authorList>
            <person name="Bult C.J."/>
            <person name="White O."/>
            <person name="Olsen G.J."/>
            <person name="Zhou L."/>
            <person name="Fleischmann R.D."/>
            <person name="Sutton G.G."/>
            <person name="Blake J.A."/>
            <person name="FitzGerald L.M."/>
            <person name="Clayton R.A."/>
            <person name="Gocayne J.D."/>
            <person name="Kerlavage A.R."/>
            <person name="Dougherty B.A."/>
            <person name="Tomb J.-F."/>
            <person name="Adams M.D."/>
            <person name="Reich C.I."/>
            <person name="Overbeek R."/>
            <person name="Kirkness E.F."/>
            <person name="Weinstock K.G."/>
            <person name="Merrick J.M."/>
            <person name="Glodek A."/>
            <person name="Scott J.L."/>
            <person name="Geoghagen N.S.M."/>
            <person name="Weidman J.F."/>
            <person name="Fuhrmann J.L."/>
            <person name="Nguyen D."/>
            <person name="Utterback T.R."/>
            <person name="Kelley J.M."/>
            <person name="Peterson J.D."/>
            <person name="Sadow P.W."/>
            <person name="Hanna M.C."/>
            <person name="Cotton M.D."/>
            <person name="Roberts K.M."/>
            <person name="Hurst M.A."/>
            <person name="Kaine B.P."/>
            <person name="Borodovsky M."/>
            <person name="Klenk H.-P."/>
            <person name="Fraser C.M."/>
            <person name="Smith H.O."/>
            <person name="Woese C.R."/>
            <person name="Venter J.C."/>
        </authorList>
    </citation>
    <scope>NUCLEOTIDE SEQUENCE [LARGE SCALE GENOMIC DNA]</scope>
    <source>
        <strain>ATCC 43067 / DSM 2661 / JAL-1 / JCM 10045 / NBRC 100440</strain>
    </source>
</reference>
<reference key="2">
    <citation type="journal article" date="2003" name="Biochemistry">
        <title>Metal ion binding and enzymatic mechanism of Methanococcus jannaschii RNase HII.</title>
        <authorList>
            <person name="Lai B."/>
            <person name="Li Y."/>
            <person name="Cao A."/>
            <person name="Lai L."/>
        </authorList>
    </citation>
    <scope>COFACTOR</scope>
    <scope>MUTAGENESIS OF ASP-7; GLU-8; ASP-112 AND ASP-149</scope>
</reference>
<reference key="3">
    <citation type="journal article" date="2000" name="Structure">
        <title>Crystal structure of archaeal RNase HII: a homologue of human major RNase H.</title>
        <authorList>
            <person name="Lai L."/>
            <person name="Yokota H."/>
            <person name="Hung L.-W."/>
            <person name="Kim R."/>
            <person name="Kim S.-H."/>
        </authorList>
    </citation>
    <scope>X-RAY CRYSTALLOGRAPHY (2.0 ANGSTROMS)</scope>
</reference>
<gene>
    <name type="primary">rnhB</name>
    <name type="ordered locus">MJ0135</name>
</gene>
<sequence>MIIIGIDEAGRGPVLGPMVVCAFAIEKEREEELKKLGVKDSKELTKNKRAYLKKLLENLGYVEKRILEAEEINQLMNSINLNDIEINAFSKVAKNLIEKLNIRDDEIEIYIDACSTNTKKFEDSFKDKIEDIIKERNLNIKIIAEHKADAKYPVVSAASIIAKAERDEIIDYYKKIYGDIGSGYPSDPKTIKFLEDYFKKHKKLPDIARTHWKTCKRILDKSKQTKLIIE</sequence>
<comment type="function">
    <text>Endonuclease that specifically degrades the RNA of RNA-DNA hybrids.</text>
</comment>
<comment type="catalytic activity">
    <reaction>
        <text>Endonucleolytic cleavage to 5'-phosphomonoester.</text>
        <dbReference type="EC" id="3.1.26.4"/>
    </reaction>
</comment>
<comment type="cofactor">
    <cofactor evidence="1">
        <name>Mn(2+)</name>
        <dbReference type="ChEBI" id="CHEBI:29035"/>
    </cofactor>
    <cofactor evidence="1">
        <name>Mg(2+)</name>
        <dbReference type="ChEBI" id="CHEBI:18420"/>
    </cofactor>
    <text evidence="1">Manganese or magnesium. Binds 1 divalent metal ion per monomer in the absence of substrate. May bind a second metal ion after substrate binding.</text>
</comment>
<comment type="subcellular location">
    <subcellularLocation>
        <location evidence="4">Cytoplasm</location>
    </subcellularLocation>
</comment>
<comment type="similarity">
    <text evidence="4">Belongs to the RNase HII family.</text>
</comment>
<proteinExistence type="evidence at protein level"/>
<organism>
    <name type="scientific">Methanocaldococcus jannaschii (strain ATCC 43067 / DSM 2661 / JAL-1 / JCM 10045 / NBRC 100440)</name>
    <name type="common">Methanococcus jannaschii</name>
    <dbReference type="NCBI Taxonomy" id="243232"/>
    <lineage>
        <taxon>Archaea</taxon>
        <taxon>Methanobacteriati</taxon>
        <taxon>Methanobacteriota</taxon>
        <taxon>Methanomada group</taxon>
        <taxon>Methanococci</taxon>
        <taxon>Methanococcales</taxon>
        <taxon>Methanocaldococcaceae</taxon>
        <taxon>Methanocaldococcus</taxon>
    </lineage>
</organism>
<evidence type="ECO:0000250" key="1"/>
<evidence type="ECO:0000255" key="2">
    <source>
        <dbReference type="PROSITE-ProRule" id="PRU01319"/>
    </source>
</evidence>
<evidence type="ECO:0000269" key="3">
    <source>
    </source>
</evidence>
<evidence type="ECO:0000305" key="4"/>
<evidence type="ECO:0007829" key="5">
    <source>
        <dbReference type="PDB" id="1EKE"/>
    </source>
</evidence>
<dbReference type="EC" id="3.1.26.4"/>
<dbReference type="EMBL" id="L77117">
    <property type="protein sequence ID" value="AAB98116.1"/>
    <property type="molecule type" value="Genomic_DNA"/>
</dbReference>
<dbReference type="PIR" id="G64316">
    <property type="entry name" value="G64316"/>
</dbReference>
<dbReference type="RefSeq" id="WP_010869628.1">
    <property type="nucleotide sequence ID" value="NC_000909.1"/>
</dbReference>
<dbReference type="PDB" id="1EKE">
    <property type="method" value="X-ray"/>
    <property type="resolution" value="2.00 A"/>
    <property type="chains" value="A/B=1-230"/>
</dbReference>
<dbReference type="PDBsum" id="1EKE"/>
<dbReference type="SMR" id="Q57599"/>
<dbReference type="FunCoup" id="Q57599">
    <property type="interactions" value="131"/>
</dbReference>
<dbReference type="STRING" id="243232.MJ_0135"/>
<dbReference type="PaxDb" id="243232-MJ_0135"/>
<dbReference type="EnsemblBacteria" id="AAB98116">
    <property type="protein sequence ID" value="AAB98116"/>
    <property type="gene ID" value="MJ_0135"/>
</dbReference>
<dbReference type="GeneID" id="1450976"/>
<dbReference type="KEGG" id="mja:MJ_0135"/>
<dbReference type="eggNOG" id="arCOG04121">
    <property type="taxonomic scope" value="Archaea"/>
</dbReference>
<dbReference type="HOGENOM" id="CLU_036532_0_4_2"/>
<dbReference type="InParanoid" id="Q57599"/>
<dbReference type="OrthoDB" id="33866at2157"/>
<dbReference type="PhylomeDB" id="Q57599"/>
<dbReference type="EvolutionaryTrace" id="Q57599"/>
<dbReference type="Proteomes" id="UP000000805">
    <property type="component" value="Chromosome"/>
</dbReference>
<dbReference type="GO" id="GO:0005737">
    <property type="term" value="C:cytoplasm"/>
    <property type="evidence" value="ECO:0007669"/>
    <property type="project" value="UniProtKB-SubCell"/>
</dbReference>
<dbReference type="GO" id="GO:0032299">
    <property type="term" value="C:ribonuclease H2 complex"/>
    <property type="evidence" value="ECO:0000318"/>
    <property type="project" value="GO_Central"/>
</dbReference>
<dbReference type="GO" id="GO:0030145">
    <property type="term" value="F:manganese ion binding"/>
    <property type="evidence" value="ECO:0007669"/>
    <property type="project" value="UniProtKB-UniRule"/>
</dbReference>
<dbReference type="GO" id="GO:0003723">
    <property type="term" value="F:RNA binding"/>
    <property type="evidence" value="ECO:0007669"/>
    <property type="project" value="InterPro"/>
</dbReference>
<dbReference type="GO" id="GO:0004523">
    <property type="term" value="F:RNA-DNA hybrid ribonuclease activity"/>
    <property type="evidence" value="ECO:0000318"/>
    <property type="project" value="GO_Central"/>
</dbReference>
<dbReference type="GO" id="GO:0043137">
    <property type="term" value="P:DNA replication, removal of RNA primer"/>
    <property type="evidence" value="ECO:0000318"/>
    <property type="project" value="GO_Central"/>
</dbReference>
<dbReference type="GO" id="GO:0006298">
    <property type="term" value="P:mismatch repair"/>
    <property type="evidence" value="ECO:0000318"/>
    <property type="project" value="GO_Central"/>
</dbReference>
<dbReference type="CDD" id="cd07180">
    <property type="entry name" value="RNase_HII_archaea_like"/>
    <property type="match status" value="1"/>
</dbReference>
<dbReference type="FunFam" id="1.10.10.460:FF:000001">
    <property type="entry name" value="Ribonuclease"/>
    <property type="match status" value="1"/>
</dbReference>
<dbReference type="FunFam" id="3.30.420.10:FF:000139">
    <property type="entry name" value="Ribonuclease HII"/>
    <property type="match status" value="1"/>
</dbReference>
<dbReference type="Gene3D" id="3.30.420.10">
    <property type="entry name" value="Ribonuclease H-like superfamily/Ribonuclease H"/>
    <property type="match status" value="1"/>
</dbReference>
<dbReference type="Gene3D" id="1.10.10.460">
    <property type="entry name" value="Ribonuclease hii. Domain 2"/>
    <property type="match status" value="1"/>
</dbReference>
<dbReference type="HAMAP" id="MF_00052_A">
    <property type="entry name" value="RNase_HII_A"/>
    <property type="match status" value="1"/>
</dbReference>
<dbReference type="InterPro" id="IPR004649">
    <property type="entry name" value="RNase_H2_suA"/>
</dbReference>
<dbReference type="InterPro" id="IPR001352">
    <property type="entry name" value="RNase_HII/HIII"/>
</dbReference>
<dbReference type="InterPro" id="IPR024567">
    <property type="entry name" value="RNase_HII/HIII_dom"/>
</dbReference>
<dbReference type="InterPro" id="IPR020787">
    <property type="entry name" value="RNase_HII_arc"/>
</dbReference>
<dbReference type="InterPro" id="IPR023160">
    <property type="entry name" value="RNase_HII_hlx-loop-hlx_cap_dom"/>
</dbReference>
<dbReference type="InterPro" id="IPR012337">
    <property type="entry name" value="RNaseH-like_sf"/>
</dbReference>
<dbReference type="InterPro" id="IPR036397">
    <property type="entry name" value="RNaseH_sf"/>
</dbReference>
<dbReference type="NCBIfam" id="TIGR00729">
    <property type="entry name" value="ribonuclease HII"/>
    <property type="match status" value="1"/>
</dbReference>
<dbReference type="PANTHER" id="PTHR10954:SF23">
    <property type="entry name" value="RIBONUCLEASE"/>
    <property type="match status" value="1"/>
</dbReference>
<dbReference type="PANTHER" id="PTHR10954">
    <property type="entry name" value="RIBONUCLEASE H2 SUBUNIT A"/>
    <property type="match status" value="1"/>
</dbReference>
<dbReference type="Pfam" id="PF01351">
    <property type="entry name" value="RNase_HII"/>
    <property type="match status" value="1"/>
</dbReference>
<dbReference type="SUPFAM" id="SSF53098">
    <property type="entry name" value="Ribonuclease H-like"/>
    <property type="match status" value="1"/>
</dbReference>
<dbReference type="PROSITE" id="PS51975">
    <property type="entry name" value="RNASE_H_2"/>
    <property type="match status" value="1"/>
</dbReference>
<accession>Q57599</accession>
<name>RNH2_METJA</name>
<keyword id="KW-0002">3D-structure</keyword>
<keyword id="KW-0963">Cytoplasm</keyword>
<keyword id="KW-0255">Endonuclease</keyword>
<keyword id="KW-0378">Hydrolase</keyword>
<keyword id="KW-0460">Magnesium</keyword>
<keyword id="KW-0464">Manganese</keyword>
<keyword id="KW-0479">Metal-binding</keyword>
<keyword id="KW-0540">Nuclease</keyword>
<keyword id="KW-1185">Reference proteome</keyword>
<feature type="chain" id="PRO_0000111663" description="Ribonuclease HII">
    <location>
        <begin position="1"/>
        <end position="230"/>
    </location>
</feature>
<feature type="domain" description="RNase H type-2" evidence="2">
    <location>
        <begin position="1"/>
        <end position="224"/>
    </location>
</feature>
<feature type="binding site" evidence="1">
    <location>
        <position position="7"/>
    </location>
    <ligand>
        <name>a divalent metal cation</name>
        <dbReference type="ChEBI" id="CHEBI:60240"/>
    </ligand>
</feature>
<feature type="binding site" evidence="1">
    <location>
        <position position="8"/>
    </location>
    <ligand>
        <name>a divalent metal cation</name>
        <dbReference type="ChEBI" id="CHEBI:60240"/>
    </ligand>
</feature>
<feature type="binding site" evidence="1">
    <location>
        <position position="112"/>
    </location>
    <ligand>
        <name>a divalent metal cation</name>
        <dbReference type="ChEBI" id="CHEBI:60240"/>
    </ligand>
</feature>
<feature type="mutagenesis site" description="Reduces activity 800-fold." evidence="3">
    <original>D</original>
    <variation>N</variation>
    <location>
        <position position="7"/>
    </location>
</feature>
<feature type="mutagenesis site" description="Reduces activity 700-fold." evidence="3">
    <original>E</original>
    <variation>Q</variation>
    <location>
        <position position="8"/>
    </location>
</feature>
<feature type="mutagenesis site" description="Reduces activity 600-fold." evidence="3">
    <original>D</original>
    <variation>N</variation>
    <location>
        <position position="112"/>
    </location>
</feature>
<feature type="mutagenesis site" description="Reduces activity 800-fold." evidence="3">
    <original>D</original>
    <variation>N</variation>
    <location>
        <position position="149"/>
    </location>
</feature>
<feature type="strand" evidence="5">
    <location>
        <begin position="2"/>
        <end position="9"/>
    </location>
</feature>
<feature type="strand" evidence="5">
    <location>
        <begin position="14"/>
        <end position="16"/>
    </location>
</feature>
<feature type="strand" evidence="5">
    <location>
        <begin position="18"/>
        <end position="26"/>
    </location>
</feature>
<feature type="helix" evidence="5">
    <location>
        <begin position="27"/>
        <end position="29"/>
    </location>
</feature>
<feature type="helix" evidence="5">
    <location>
        <begin position="30"/>
        <end position="34"/>
    </location>
</feature>
<feature type="turn" evidence="5">
    <location>
        <begin position="35"/>
        <end position="37"/>
    </location>
</feature>
<feature type="helix" evidence="5">
    <location>
        <begin position="46"/>
        <end position="59"/>
    </location>
</feature>
<feature type="strand" evidence="5">
    <location>
        <begin position="60"/>
        <end position="67"/>
    </location>
</feature>
<feature type="helix" evidence="5">
    <location>
        <begin position="69"/>
        <end position="75"/>
    </location>
</feature>
<feature type="turn" evidence="5">
    <location>
        <begin position="76"/>
        <end position="78"/>
    </location>
</feature>
<feature type="helix" evidence="5">
    <location>
        <begin position="81"/>
        <end position="99"/>
    </location>
</feature>
<feature type="strand" evidence="5">
    <location>
        <begin position="104"/>
        <end position="112"/>
    </location>
</feature>
<feature type="helix" evidence="5">
    <location>
        <begin position="118"/>
        <end position="133"/>
    </location>
</feature>
<feature type="turn" evidence="5">
    <location>
        <begin position="134"/>
        <end position="137"/>
    </location>
</feature>
<feature type="strand" evidence="5">
    <location>
        <begin position="139"/>
        <end position="145"/>
    </location>
</feature>
<feature type="helix" evidence="5">
    <location>
        <begin position="148"/>
        <end position="150"/>
    </location>
</feature>
<feature type="helix" evidence="5">
    <location>
        <begin position="153"/>
        <end position="176"/>
    </location>
</feature>
<feature type="helix" evidence="5">
    <location>
        <begin position="188"/>
        <end position="201"/>
    </location>
</feature>
<feature type="helix" evidence="5">
    <location>
        <begin position="213"/>
        <end position="221"/>
    </location>
</feature>
<protein>
    <recommendedName>
        <fullName>Ribonuclease HII</fullName>
        <shortName>RNase HII</shortName>
        <ecNumber>3.1.26.4</ecNumber>
    </recommendedName>
</protein>